<name>RL36_CHLTB</name>
<protein>
    <recommendedName>
        <fullName evidence="1">Large ribosomal subunit protein bL36</fullName>
    </recommendedName>
    <alternativeName>
        <fullName evidence="3">50S ribosomal protein L36</fullName>
    </alternativeName>
</protein>
<gene>
    <name evidence="1" type="primary">rpmJ</name>
    <name type="ordered locus">CTLon_0155</name>
</gene>
<feature type="chain" id="PRO_0000344655" description="Large ribosomal subunit protein bL36">
    <location>
        <begin position="1"/>
        <end position="45"/>
    </location>
</feature>
<feature type="region of interest" description="Disordered" evidence="2">
    <location>
        <begin position="1"/>
        <end position="45"/>
    </location>
</feature>
<comment type="similarity">
    <text evidence="1">Belongs to the bacterial ribosomal protein bL36 family.</text>
</comment>
<organism>
    <name type="scientific">Chlamydia trachomatis serovar L2b (strain UCH-1/proctitis)</name>
    <dbReference type="NCBI Taxonomy" id="471473"/>
    <lineage>
        <taxon>Bacteria</taxon>
        <taxon>Pseudomonadati</taxon>
        <taxon>Chlamydiota</taxon>
        <taxon>Chlamydiia</taxon>
        <taxon>Chlamydiales</taxon>
        <taxon>Chlamydiaceae</taxon>
        <taxon>Chlamydia/Chlamydophila group</taxon>
        <taxon>Chlamydia</taxon>
    </lineage>
</organism>
<evidence type="ECO:0000255" key="1">
    <source>
        <dbReference type="HAMAP-Rule" id="MF_00251"/>
    </source>
</evidence>
<evidence type="ECO:0000256" key="2">
    <source>
        <dbReference type="SAM" id="MobiDB-lite"/>
    </source>
</evidence>
<evidence type="ECO:0000305" key="3"/>
<accession>B0BAP1</accession>
<dbReference type="EMBL" id="AM884177">
    <property type="protein sequence ID" value="CAP06553.1"/>
    <property type="molecule type" value="Genomic_DNA"/>
</dbReference>
<dbReference type="RefSeq" id="WP_009872166.1">
    <property type="nucleotide sequence ID" value="NC_010280.2"/>
</dbReference>
<dbReference type="SMR" id="B0BAP1"/>
<dbReference type="GeneID" id="93065661"/>
<dbReference type="KEGG" id="ctl:CTLon_0155"/>
<dbReference type="HOGENOM" id="CLU_135723_3_3_0"/>
<dbReference type="Proteomes" id="UP001154401">
    <property type="component" value="Chromosome"/>
</dbReference>
<dbReference type="GO" id="GO:1990904">
    <property type="term" value="C:ribonucleoprotein complex"/>
    <property type="evidence" value="ECO:0007669"/>
    <property type="project" value="UniProtKB-KW"/>
</dbReference>
<dbReference type="GO" id="GO:0005840">
    <property type="term" value="C:ribosome"/>
    <property type="evidence" value="ECO:0007669"/>
    <property type="project" value="UniProtKB-KW"/>
</dbReference>
<dbReference type="GO" id="GO:0003735">
    <property type="term" value="F:structural constituent of ribosome"/>
    <property type="evidence" value="ECO:0007669"/>
    <property type="project" value="InterPro"/>
</dbReference>
<dbReference type="GO" id="GO:0006412">
    <property type="term" value="P:translation"/>
    <property type="evidence" value="ECO:0007669"/>
    <property type="project" value="UniProtKB-UniRule"/>
</dbReference>
<dbReference type="HAMAP" id="MF_00251">
    <property type="entry name" value="Ribosomal_bL36"/>
    <property type="match status" value="1"/>
</dbReference>
<dbReference type="InterPro" id="IPR000473">
    <property type="entry name" value="Ribosomal_bL36"/>
</dbReference>
<dbReference type="InterPro" id="IPR035977">
    <property type="entry name" value="Ribosomal_bL36_sp"/>
</dbReference>
<dbReference type="NCBIfam" id="TIGR01022">
    <property type="entry name" value="rpmJ_bact"/>
    <property type="match status" value="1"/>
</dbReference>
<dbReference type="Pfam" id="PF00444">
    <property type="entry name" value="Ribosomal_L36"/>
    <property type="match status" value="1"/>
</dbReference>
<dbReference type="SUPFAM" id="SSF57840">
    <property type="entry name" value="Ribosomal protein L36"/>
    <property type="match status" value="1"/>
</dbReference>
<dbReference type="PROSITE" id="PS00828">
    <property type="entry name" value="RIBOSOMAL_L36"/>
    <property type="match status" value="1"/>
</dbReference>
<keyword id="KW-0687">Ribonucleoprotein</keyword>
<keyword id="KW-0689">Ribosomal protein</keyword>
<sequence length="45" mass="5163">MRVSSSIKADPSKGDKLVRRKGRLYVINKKDPNRKQRQAGPARKK</sequence>
<proteinExistence type="inferred from homology"/>
<reference key="1">
    <citation type="journal article" date="2008" name="Genome Res.">
        <title>Chlamydia trachomatis: genome sequence analysis of lymphogranuloma venereum isolates.</title>
        <authorList>
            <person name="Thomson N.R."/>
            <person name="Holden M.T.G."/>
            <person name="Carder C."/>
            <person name="Lennard N."/>
            <person name="Lockey S.J."/>
            <person name="Marsh P."/>
            <person name="Skipp P."/>
            <person name="O'Connor C.D."/>
            <person name="Goodhead I."/>
            <person name="Norbertzcak H."/>
            <person name="Harris B."/>
            <person name="Ormond D."/>
            <person name="Rance R."/>
            <person name="Quail M.A."/>
            <person name="Parkhill J."/>
            <person name="Stephens R.S."/>
            <person name="Clarke I.N."/>
        </authorList>
    </citation>
    <scope>NUCLEOTIDE SEQUENCE [LARGE SCALE GENOMIC DNA]</scope>
    <source>
        <strain>UCH-1/proctitis</strain>
    </source>
</reference>